<dbReference type="EC" id="1.1.1.1"/>
<dbReference type="EMBL" id="AJ539546">
    <property type="protein sequence ID" value="CAD62458.1"/>
    <property type="molecule type" value="Genomic_DNA"/>
</dbReference>
<dbReference type="SMR" id="Q70UN9"/>
<dbReference type="GO" id="GO:0005737">
    <property type="term" value="C:cytoplasm"/>
    <property type="evidence" value="ECO:0007669"/>
    <property type="project" value="TreeGrafter"/>
</dbReference>
<dbReference type="GO" id="GO:0004022">
    <property type="term" value="F:alcohol dehydrogenase (NAD+) activity"/>
    <property type="evidence" value="ECO:0000250"/>
    <property type="project" value="UniProtKB"/>
</dbReference>
<dbReference type="CDD" id="cd05323">
    <property type="entry name" value="ADH_SDR_c_like"/>
    <property type="match status" value="1"/>
</dbReference>
<dbReference type="FunFam" id="3.40.50.720:FF:000149">
    <property type="entry name" value="15-hydroxyprostaglandin dehydrogenase [NAD(+)]"/>
    <property type="match status" value="1"/>
</dbReference>
<dbReference type="Gene3D" id="3.40.50.720">
    <property type="entry name" value="NAD(P)-binding Rossmann-like Domain"/>
    <property type="match status" value="1"/>
</dbReference>
<dbReference type="InterPro" id="IPR002426">
    <property type="entry name" value="ADH_Ceratitis-type"/>
</dbReference>
<dbReference type="InterPro" id="IPR036291">
    <property type="entry name" value="NAD(P)-bd_dom_sf"/>
</dbReference>
<dbReference type="InterPro" id="IPR020904">
    <property type="entry name" value="Sc_DH/Rdtase_CS"/>
</dbReference>
<dbReference type="InterPro" id="IPR002347">
    <property type="entry name" value="SDR_fam"/>
</dbReference>
<dbReference type="PANTHER" id="PTHR44229">
    <property type="entry name" value="15-HYDROXYPROSTAGLANDIN DEHYDROGENASE [NAD(+)]"/>
    <property type="match status" value="1"/>
</dbReference>
<dbReference type="PANTHER" id="PTHR44229:SF8">
    <property type="entry name" value="ALCOHOL DEHYDROGENASE-RELATED"/>
    <property type="match status" value="1"/>
</dbReference>
<dbReference type="Pfam" id="PF00106">
    <property type="entry name" value="adh_short"/>
    <property type="match status" value="1"/>
</dbReference>
<dbReference type="PRINTS" id="PR01169">
    <property type="entry name" value="CERATITISADH"/>
</dbReference>
<dbReference type="PRINTS" id="PR01167">
    <property type="entry name" value="INSADHFAMILY"/>
</dbReference>
<dbReference type="PRINTS" id="PR00080">
    <property type="entry name" value="SDRFAMILY"/>
</dbReference>
<dbReference type="SUPFAM" id="SSF51735">
    <property type="entry name" value="NAD(P)-binding Rossmann-fold domains"/>
    <property type="match status" value="1"/>
</dbReference>
<dbReference type="PROSITE" id="PS00061">
    <property type="entry name" value="ADH_SHORT"/>
    <property type="match status" value="1"/>
</dbReference>
<comment type="catalytic activity">
    <reaction evidence="2">
        <text>a primary alcohol + NAD(+) = an aldehyde + NADH + H(+)</text>
        <dbReference type="Rhea" id="RHEA:10736"/>
        <dbReference type="ChEBI" id="CHEBI:15378"/>
        <dbReference type="ChEBI" id="CHEBI:15734"/>
        <dbReference type="ChEBI" id="CHEBI:17478"/>
        <dbReference type="ChEBI" id="CHEBI:57540"/>
        <dbReference type="ChEBI" id="CHEBI:57945"/>
        <dbReference type="EC" id="1.1.1.1"/>
    </reaction>
</comment>
<comment type="catalytic activity">
    <reaction evidence="2">
        <text>a secondary alcohol + NAD(+) = a ketone + NADH + H(+)</text>
        <dbReference type="Rhea" id="RHEA:10740"/>
        <dbReference type="ChEBI" id="CHEBI:15378"/>
        <dbReference type="ChEBI" id="CHEBI:17087"/>
        <dbReference type="ChEBI" id="CHEBI:35681"/>
        <dbReference type="ChEBI" id="CHEBI:57540"/>
        <dbReference type="ChEBI" id="CHEBI:57945"/>
        <dbReference type="EC" id="1.1.1.1"/>
    </reaction>
</comment>
<comment type="subunit">
    <text evidence="1">Homodimer.</text>
</comment>
<comment type="similarity">
    <text evidence="3">Belongs to the short-chain dehydrogenases/reductases (SDR) family.</text>
</comment>
<sequence>MSVAGKNVVFVGGLGFIGYEACKTLITRDLASLFVFDILDKPEAVKALEEINPKTKVYYTKFDITSKDNIKQSLADVIAKVQYIDVLVNGAGILNDPNVEWTMNINLIGLINTTLEAIPLMDKNKKGRGGVIVNIASVLGLEPGPPAAIYCASKFGVMGFSRSLGDPHYYEHTGIAVVTFCPGLTDTPLKNNVATKYTFDYSKEIGEKLNHSKTQKPEVCGAHLAQVIELRDNGAIYISNQGTLTKVKPSVYWEPTY</sequence>
<gene>
    <name type="primary">ADH1</name>
</gene>
<accession>Q70UN9</accession>
<evidence type="ECO:0000250" key="1"/>
<evidence type="ECO:0000255" key="2">
    <source>
        <dbReference type="PROSITE-ProRule" id="PRU10001"/>
    </source>
</evidence>
<evidence type="ECO:0000305" key="3"/>
<name>ADH1_CERCO</name>
<protein>
    <recommendedName>
        <fullName>Alcohol dehydrogenase 1</fullName>
        <ecNumber>1.1.1.1</ecNumber>
    </recommendedName>
</protein>
<reference key="1">
    <citation type="journal article" date="2003" name="J. Mol. Evol.">
        <title>Exploring the evolutionary history of the alcohol dehydrogenase gene (Adh) duplication in species of the family tephritidae.</title>
        <authorList>
            <person name="Goulielmos G.N."/>
            <person name="Loukas M."/>
            <person name="Bondinas G."/>
            <person name="Zouros E."/>
        </authorList>
    </citation>
    <scope>NUCLEOTIDE SEQUENCE [GENOMIC DNA]</scope>
</reference>
<keyword id="KW-0520">NAD</keyword>
<keyword id="KW-0560">Oxidoreductase</keyword>
<organism>
    <name type="scientific">Ceratitis cosyra</name>
    <name type="common">Mango fruit fly</name>
    <name type="synonym">Trypeta cosyra</name>
    <dbReference type="NCBI Taxonomy" id="194917"/>
    <lineage>
        <taxon>Eukaryota</taxon>
        <taxon>Metazoa</taxon>
        <taxon>Ecdysozoa</taxon>
        <taxon>Arthropoda</taxon>
        <taxon>Hexapoda</taxon>
        <taxon>Insecta</taxon>
        <taxon>Pterygota</taxon>
        <taxon>Neoptera</taxon>
        <taxon>Endopterygota</taxon>
        <taxon>Diptera</taxon>
        <taxon>Brachycera</taxon>
        <taxon>Muscomorpha</taxon>
        <taxon>Tephritoidea</taxon>
        <taxon>Tephritidae</taxon>
        <taxon>Ceratitis</taxon>
        <taxon>Ceratalaspis</taxon>
    </lineage>
</organism>
<feature type="chain" id="PRO_0000277838" description="Alcohol dehydrogenase 1">
    <location>
        <begin position="1"/>
        <end position="257"/>
    </location>
</feature>
<feature type="active site" description="Proton acceptor" evidence="2">
    <location>
        <position position="150"/>
    </location>
</feature>
<feature type="binding site" evidence="1">
    <location>
        <begin position="9"/>
        <end position="33"/>
    </location>
    <ligand>
        <name>NAD(+)</name>
        <dbReference type="ChEBI" id="CHEBI:57540"/>
    </ligand>
</feature>
<feature type="binding site" evidence="1">
    <location>
        <position position="137"/>
    </location>
    <ligand>
        <name>substrate</name>
    </ligand>
</feature>
<proteinExistence type="inferred from homology"/>